<organism>
    <name type="scientific">Staphylococcus aureus (strain JH9)</name>
    <dbReference type="NCBI Taxonomy" id="359786"/>
    <lineage>
        <taxon>Bacteria</taxon>
        <taxon>Bacillati</taxon>
        <taxon>Bacillota</taxon>
        <taxon>Bacilli</taxon>
        <taxon>Bacillales</taxon>
        <taxon>Staphylococcaceae</taxon>
        <taxon>Staphylococcus</taxon>
    </lineage>
</organism>
<evidence type="ECO:0000255" key="1">
    <source>
        <dbReference type="HAMAP-Rule" id="MF_00210"/>
    </source>
</evidence>
<proteinExistence type="inferred from homology"/>
<dbReference type="EC" id="2.5.1.19" evidence="1"/>
<dbReference type="EMBL" id="CP000703">
    <property type="protein sequence ID" value="ABQ49317.1"/>
    <property type="molecule type" value="Genomic_DNA"/>
</dbReference>
<dbReference type="RefSeq" id="WP_000253232.1">
    <property type="nucleotide sequence ID" value="NC_009487.1"/>
</dbReference>
<dbReference type="SMR" id="A5ISZ4"/>
<dbReference type="KEGG" id="saj:SaurJH9_1523"/>
<dbReference type="HOGENOM" id="CLU_024321_0_1_9"/>
<dbReference type="UniPathway" id="UPA00053">
    <property type="reaction ID" value="UER00089"/>
</dbReference>
<dbReference type="GO" id="GO:0005737">
    <property type="term" value="C:cytoplasm"/>
    <property type="evidence" value="ECO:0007669"/>
    <property type="project" value="UniProtKB-SubCell"/>
</dbReference>
<dbReference type="GO" id="GO:0003866">
    <property type="term" value="F:3-phosphoshikimate 1-carboxyvinyltransferase activity"/>
    <property type="evidence" value="ECO:0007669"/>
    <property type="project" value="UniProtKB-UniRule"/>
</dbReference>
<dbReference type="GO" id="GO:0008652">
    <property type="term" value="P:amino acid biosynthetic process"/>
    <property type="evidence" value="ECO:0007669"/>
    <property type="project" value="UniProtKB-KW"/>
</dbReference>
<dbReference type="GO" id="GO:0009073">
    <property type="term" value="P:aromatic amino acid family biosynthetic process"/>
    <property type="evidence" value="ECO:0007669"/>
    <property type="project" value="UniProtKB-KW"/>
</dbReference>
<dbReference type="GO" id="GO:0009423">
    <property type="term" value="P:chorismate biosynthetic process"/>
    <property type="evidence" value="ECO:0007669"/>
    <property type="project" value="UniProtKB-UniRule"/>
</dbReference>
<dbReference type="CDD" id="cd01556">
    <property type="entry name" value="EPSP_synthase"/>
    <property type="match status" value="1"/>
</dbReference>
<dbReference type="FunFam" id="3.65.10.10:FF:000005">
    <property type="entry name" value="3-phosphoshikimate 1-carboxyvinyltransferase"/>
    <property type="match status" value="1"/>
</dbReference>
<dbReference type="FunFam" id="3.65.10.10:FF:000006">
    <property type="entry name" value="3-phosphoshikimate 1-carboxyvinyltransferase"/>
    <property type="match status" value="1"/>
</dbReference>
<dbReference type="Gene3D" id="3.65.10.10">
    <property type="entry name" value="Enolpyruvate transferase domain"/>
    <property type="match status" value="2"/>
</dbReference>
<dbReference type="HAMAP" id="MF_00210">
    <property type="entry name" value="EPSP_synth"/>
    <property type="match status" value="1"/>
</dbReference>
<dbReference type="InterPro" id="IPR001986">
    <property type="entry name" value="Enolpyruvate_Tfrase_dom"/>
</dbReference>
<dbReference type="InterPro" id="IPR036968">
    <property type="entry name" value="Enolpyruvate_Tfrase_sf"/>
</dbReference>
<dbReference type="InterPro" id="IPR006264">
    <property type="entry name" value="EPSP_synthase"/>
</dbReference>
<dbReference type="InterPro" id="IPR023193">
    <property type="entry name" value="EPSP_synthase_CS"/>
</dbReference>
<dbReference type="InterPro" id="IPR013792">
    <property type="entry name" value="RNA3'P_cycl/enolpyr_Trfase_a/b"/>
</dbReference>
<dbReference type="NCBIfam" id="TIGR01356">
    <property type="entry name" value="aroA"/>
    <property type="match status" value="1"/>
</dbReference>
<dbReference type="PANTHER" id="PTHR21090">
    <property type="entry name" value="AROM/DEHYDROQUINATE SYNTHASE"/>
    <property type="match status" value="1"/>
</dbReference>
<dbReference type="PANTHER" id="PTHR21090:SF5">
    <property type="entry name" value="PENTAFUNCTIONAL AROM POLYPEPTIDE"/>
    <property type="match status" value="1"/>
</dbReference>
<dbReference type="Pfam" id="PF00275">
    <property type="entry name" value="EPSP_synthase"/>
    <property type="match status" value="1"/>
</dbReference>
<dbReference type="PIRSF" id="PIRSF000505">
    <property type="entry name" value="EPSPS"/>
    <property type="match status" value="1"/>
</dbReference>
<dbReference type="SUPFAM" id="SSF55205">
    <property type="entry name" value="EPT/RTPC-like"/>
    <property type="match status" value="1"/>
</dbReference>
<dbReference type="PROSITE" id="PS00104">
    <property type="entry name" value="EPSP_SYNTHASE_1"/>
    <property type="match status" value="1"/>
</dbReference>
<dbReference type="PROSITE" id="PS00885">
    <property type="entry name" value="EPSP_SYNTHASE_2"/>
    <property type="match status" value="1"/>
</dbReference>
<keyword id="KW-0028">Amino-acid biosynthesis</keyword>
<keyword id="KW-0057">Aromatic amino acid biosynthesis</keyword>
<keyword id="KW-0963">Cytoplasm</keyword>
<keyword id="KW-0808">Transferase</keyword>
<feature type="chain" id="PRO_1000078002" description="3-phosphoshikimate 1-carboxyvinyltransferase">
    <location>
        <begin position="1"/>
        <end position="432"/>
    </location>
</feature>
<feature type="active site" description="Proton acceptor" evidence="1">
    <location>
        <position position="317"/>
    </location>
</feature>
<feature type="binding site" evidence="1">
    <location>
        <position position="23"/>
    </location>
    <ligand>
        <name>3-phosphoshikimate</name>
        <dbReference type="ChEBI" id="CHEBI:145989"/>
    </ligand>
</feature>
<feature type="binding site" evidence="1">
    <location>
        <position position="23"/>
    </location>
    <ligand>
        <name>phosphoenolpyruvate</name>
        <dbReference type="ChEBI" id="CHEBI:58702"/>
    </ligand>
</feature>
<feature type="binding site" evidence="1">
    <location>
        <position position="24"/>
    </location>
    <ligand>
        <name>3-phosphoshikimate</name>
        <dbReference type="ChEBI" id="CHEBI:145989"/>
    </ligand>
</feature>
<feature type="binding site" evidence="1">
    <location>
        <position position="28"/>
    </location>
    <ligand>
        <name>3-phosphoshikimate</name>
        <dbReference type="ChEBI" id="CHEBI:145989"/>
    </ligand>
</feature>
<feature type="binding site" evidence="1">
    <location>
        <position position="95"/>
    </location>
    <ligand>
        <name>phosphoenolpyruvate</name>
        <dbReference type="ChEBI" id="CHEBI:58702"/>
    </ligand>
</feature>
<feature type="binding site" evidence="1">
    <location>
        <position position="123"/>
    </location>
    <ligand>
        <name>phosphoenolpyruvate</name>
        <dbReference type="ChEBI" id="CHEBI:58702"/>
    </ligand>
</feature>
<feature type="binding site" evidence="1">
    <location>
        <position position="167"/>
    </location>
    <ligand>
        <name>3-phosphoshikimate</name>
        <dbReference type="ChEBI" id="CHEBI:145989"/>
    </ligand>
</feature>
<feature type="binding site" evidence="1">
    <location>
        <position position="169"/>
    </location>
    <ligand>
        <name>3-phosphoshikimate</name>
        <dbReference type="ChEBI" id="CHEBI:145989"/>
    </ligand>
</feature>
<feature type="binding site" evidence="1">
    <location>
        <position position="169"/>
    </location>
    <ligand>
        <name>phosphoenolpyruvate</name>
        <dbReference type="ChEBI" id="CHEBI:58702"/>
    </ligand>
</feature>
<feature type="binding site" evidence="1">
    <location>
        <position position="317"/>
    </location>
    <ligand>
        <name>3-phosphoshikimate</name>
        <dbReference type="ChEBI" id="CHEBI:145989"/>
    </ligand>
</feature>
<feature type="binding site" evidence="1">
    <location>
        <position position="344"/>
    </location>
    <ligand>
        <name>3-phosphoshikimate</name>
        <dbReference type="ChEBI" id="CHEBI:145989"/>
    </ligand>
</feature>
<feature type="binding site" evidence="1">
    <location>
        <position position="348"/>
    </location>
    <ligand>
        <name>phosphoenolpyruvate</name>
        <dbReference type="ChEBI" id="CHEBI:58702"/>
    </ligand>
</feature>
<feature type="binding site" evidence="1">
    <location>
        <position position="390"/>
    </location>
    <ligand>
        <name>phosphoenolpyruvate</name>
        <dbReference type="ChEBI" id="CHEBI:58702"/>
    </ligand>
</feature>
<comment type="function">
    <text evidence="1">Catalyzes the transfer of the enolpyruvyl moiety of phosphoenolpyruvate (PEP) to the 5-hydroxyl of shikimate-3-phosphate (S3P) to produce enolpyruvyl shikimate-3-phosphate and inorganic phosphate.</text>
</comment>
<comment type="catalytic activity">
    <reaction evidence="1">
        <text>3-phosphoshikimate + phosphoenolpyruvate = 5-O-(1-carboxyvinyl)-3-phosphoshikimate + phosphate</text>
        <dbReference type="Rhea" id="RHEA:21256"/>
        <dbReference type="ChEBI" id="CHEBI:43474"/>
        <dbReference type="ChEBI" id="CHEBI:57701"/>
        <dbReference type="ChEBI" id="CHEBI:58702"/>
        <dbReference type="ChEBI" id="CHEBI:145989"/>
        <dbReference type="EC" id="2.5.1.19"/>
    </reaction>
    <physiologicalReaction direction="left-to-right" evidence="1">
        <dbReference type="Rhea" id="RHEA:21257"/>
    </physiologicalReaction>
</comment>
<comment type="pathway">
    <text evidence="1">Metabolic intermediate biosynthesis; chorismate biosynthesis; chorismate from D-erythrose 4-phosphate and phosphoenolpyruvate: step 6/7.</text>
</comment>
<comment type="subunit">
    <text evidence="1">Monomer.</text>
</comment>
<comment type="subcellular location">
    <subcellularLocation>
        <location evidence="1">Cytoplasm</location>
    </subcellularLocation>
</comment>
<comment type="similarity">
    <text evidence="1">Belongs to the EPSP synthase family.</text>
</comment>
<protein>
    <recommendedName>
        <fullName evidence="1">3-phosphoshikimate 1-carboxyvinyltransferase</fullName>
        <ecNumber evidence="1">2.5.1.19</ecNumber>
    </recommendedName>
    <alternativeName>
        <fullName evidence="1">5-enolpyruvylshikimate-3-phosphate synthase</fullName>
        <shortName evidence="1">EPSP synthase</shortName>
        <shortName evidence="1">EPSPS</shortName>
    </alternativeName>
</protein>
<sequence length="432" mass="47072">MVSEQIIDISGPLKGEIEVPGDKSMTHRAIMLASLAEGTSNIYKPLLGEDCRRTMDIFRLLGVDIKEDEDKLVVNSPGYKAFKTPHQVLYTGNSGTTTRLLAGLLSGLGIESVLSGDVSIGKRPMDRVLRPLKLMDANIEGIEDNYTPLIIKPSVIKGINYQMEVASAQVKSAILFASLFSNDTTVIKELDVSRNHTETMFRHFNIPIEAERLSITTTPDAIQHIKPADFHVPGDISSAAFFIVAALITPESDVTIHNVGINPTRSGIIDIVEKMGGNIQLFNQTTGAEPTASIRIQYTPMLQPITIEGELVTKAIDELPVIALLCTQAVGTSTIKDAEELKVKETNRIDTTADMLNLLGFELQPTNDGLIIHPSEFKTNATVDSLTDHRIGMMLAVASLLSSEPVKIKQFDAVNVSFPGFLPKLKLLENEG</sequence>
<reference key="1">
    <citation type="submission" date="2007-05" db="EMBL/GenBank/DDBJ databases">
        <title>Complete sequence of chromosome of Staphylococcus aureus subsp. aureus JH9.</title>
        <authorList>
            <consortium name="US DOE Joint Genome Institute"/>
            <person name="Copeland A."/>
            <person name="Lucas S."/>
            <person name="Lapidus A."/>
            <person name="Barry K."/>
            <person name="Detter J.C."/>
            <person name="Glavina del Rio T."/>
            <person name="Hammon N."/>
            <person name="Israni S."/>
            <person name="Pitluck S."/>
            <person name="Chain P."/>
            <person name="Malfatti S."/>
            <person name="Shin M."/>
            <person name="Vergez L."/>
            <person name="Schmutz J."/>
            <person name="Larimer F."/>
            <person name="Land M."/>
            <person name="Hauser L."/>
            <person name="Kyrpides N."/>
            <person name="Kim E."/>
            <person name="Tomasz A."/>
            <person name="Richardson P."/>
        </authorList>
    </citation>
    <scope>NUCLEOTIDE SEQUENCE [LARGE SCALE GENOMIC DNA]</scope>
    <source>
        <strain>JH9</strain>
    </source>
</reference>
<gene>
    <name evidence="1" type="primary">aroA</name>
    <name type="ordered locus">SaurJH9_1523</name>
</gene>
<name>AROA_STAA9</name>
<accession>A5ISZ4</accession>